<feature type="chain" id="PRO_1000148554" description="Betaine aldehyde dehydrogenase">
    <location>
        <begin position="1"/>
        <end position="487"/>
    </location>
</feature>
<feature type="active site" description="Charge relay system" evidence="1">
    <location>
        <position position="161"/>
    </location>
</feature>
<feature type="active site" description="Proton acceptor" evidence="1">
    <location>
        <position position="249"/>
    </location>
</feature>
<feature type="active site" description="Nucleophile" evidence="1">
    <location>
        <position position="283"/>
    </location>
</feature>
<feature type="active site" description="Charge relay system" evidence="1">
    <location>
        <position position="461"/>
    </location>
</feature>
<feature type="binding site" evidence="1">
    <location>
        <position position="27"/>
    </location>
    <ligand>
        <name>K(+)</name>
        <dbReference type="ChEBI" id="CHEBI:29103"/>
        <label>1</label>
    </ligand>
</feature>
<feature type="binding site" evidence="1">
    <location>
        <position position="93"/>
    </location>
    <ligand>
        <name>K(+)</name>
        <dbReference type="ChEBI" id="CHEBI:29103"/>
        <label>1</label>
    </ligand>
</feature>
<feature type="binding site" evidence="1">
    <location>
        <begin position="149"/>
        <end position="151"/>
    </location>
    <ligand>
        <name>NAD(+)</name>
        <dbReference type="ChEBI" id="CHEBI:57540"/>
    </ligand>
</feature>
<feature type="binding site" evidence="1">
    <location>
        <begin position="175"/>
        <end position="178"/>
    </location>
    <ligand>
        <name>NAD(+)</name>
        <dbReference type="ChEBI" id="CHEBI:57540"/>
    </ligand>
</feature>
<feature type="binding site" evidence="1">
    <location>
        <begin position="228"/>
        <end position="231"/>
    </location>
    <ligand>
        <name>NAD(+)</name>
        <dbReference type="ChEBI" id="CHEBI:57540"/>
    </ligand>
</feature>
<feature type="binding site" evidence="1">
    <location>
        <position position="243"/>
    </location>
    <ligand>
        <name>K(+)</name>
        <dbReference type="ChEBI" id="CHEBI:29103"/>
        <label>2</label>
    </ligand>
</feature>
<feature type="binding site" evidence="1">
    <location>
        <position position="251"/>
    </location>
    <ligand>
        <name>NAD(+)</name>
        <dbReference type="ChEBI" id="CHEBI:57540"/>
    </ligand>
</feature>
<feature type="binding site" description="covalent" evidence="1">
    <location>
        <position position="283"/>
    </location>
    <ligand>
        <name>NAD(+)</name>
        <dbReference type="ChEBI" id="CHEBI:57540"/>
    </ligand>
</feature>
<feature type="binding site" evidence="1">
    <location>
        <position position="384"/>
    </location>
    <ligand>
        <name>NAD(+)</name>
        <dbReference type="ChEBI" id="CHEBI:57540"/>
    </ligand>
</feature>
<feature type="binding site" evidence="1">
    <location>
        <position position="454"/>
    </location>
    <ligand>
        <name>K(+)</name>
        <dbReference type="ChEBI" id="CHEBI:29103"/>
        <label>2</label>
    </ligand>
</feature>
<feature type="binding site" evidence="1">
    <location>
        <position position="457"/>
    </location>
    <ligand>
        <name>K(+)</name>
        <dbReference type="ChEBI" id="CHEBI:29103"/>
        <label>2</label>
    </ligand>
</feature>
<feature type="modified residue" description="Cysteine sulfenic acid (-SOH)" evidence="1">
    <location>
        <position position="283"/>
    </location>
</feature>
<organism>
    <name type="scientific">Brucella melitensis biotype 2 (strain ATCC 23457)</name>
    <dbReference type="NCBI Taxonomy" id="546272"/>
    <lineage>
        <taxon>Bacteria</taxon>
        <taxon>Pseudomonadati</taxon>
        <taxon>Pseudomonadota</taxon>
        <taxon>Alphaproteobacteria</taxon>
        <taxon>Hyphomicrobiales</taxon>
        <taxon>Brucellaceae</taxon>
        <taxon>Brucella/Ochrobactrum group</taxon>
        <taxon>Brucella</taxon>
    </lineage>
</organism>
<keyword id="KW-0479">Metal-binding</keyword>
<keyword id="KW-0520">NAD</keyword>
<keyword id="KW-0521">NADP</keyword>
<keyword id="KW-0558">Oxidation</keyword>
<keyword id="KW-0560">Oxidoreductase</keyword>
<keyword id="KW-0630">Potassium</keyword>
<name>BETB_BRUMB</name>
<protein>
    <recommendedName>
        <fullName evidence="1">Betaine aldehyde dehydrogenase</fullName>
        <shortName evidence="1">BADH</shortName>
        <ecNumber evidence="1">1.2.1.8</ecNumber>
    </recommendedName>
</protein>
<reference key="1">
    <citation type="submission" date="2009-03" db="EMBL/GenBank/DDBJ databases">
        <title>Brucella melitensis ATCC 23457 whole genome shotgun sequencing project.</title>
        <authorList>
            <person name="Setubal J.C."/>
            <person name="Boyle S."/>
            <person name="Crasta O.R."/>
            <person name="Gillespie J.J."/>
            <person name="Kenyon R.W."/>
            <person name="Lu J."/>
            <person name="Mane S."/>
            <person name="Nagrani S."/>
            <person name="Shallom J.M."/>
            <person name="Shallom S."/>
            <person name="Shukla M."/>
            <person name="Snyder E.E."/>
            <person name="Sobral B.W."/>
            <person name="Wattam A.R."/>
            <person name="Will R."/>
            <person name="Williams K."/>
            <person name="Yoo H."/>
            <person name="Munk C."/>
            <person name="Tapia R."/>
            <person name="Han C."/>
            <person name="Detter J.C."/>
            <person name="Bruce D."/>
            <person name="Brettin T.S."/>
        </authorList>
    </citation>
    <scope>NUCLEOTIDE SEQUENCE [LARGE SCALE GENOMIC DNA]</scope>
    <source>
        <strain>ATCC 23457</strain>
    </source>
</reference>
<dbReference type="EC" id="1.2.1.8" evidence="1"/>
<dbReference type="EMBL" id="CP001488">
    <property type="protein sequence ID" value="ACO00361.1"/>
    <property type="molecule type" value="Genomic_DNA"/>
</dbReference>
<dbReference type="RefSeq" id="WP_004686552.1">
    <property type="nucleotide sequence ID" value="NC_012441.1"/>
</dbReference>
<dbReference type="SMR" id="C0RHQ3"/>
<dbReference type="KEGG" id="bmi:BMEA_A0589"/>
<dbReference type="HOGENOM" id="CLU_005391_0_1_5"/>
<dbReference type="UniPathway" id="UPA00529">
    <property type="reaction ID" value="UER00386"/>
</dbReference>
<dbReference type="Proteomes" id="UP000001748">
    <property type="component" value="Chromosome I"/>
</dbReference>
<dbReference type="GO" id="GO:0008802">
    <property type="term" value="F:betaine-aldehyde dehydrogenase (NAD+) activity"/>
    <property type="evidence" value="ECO:0007669"/>
    <property type="project" value="UniProtKB-UniRule"/>
</dbReference>
<dbReference type="GO" id="GO:0046872">
    <property type="term" value="F:metal ion binding"/>
    <property type="evidence" value="ECO:0007669"/>
    <property type="project" value="UniProtKB-KW"/>
</dbReference>
<dbReference type="GO" id="GO:0019285">
    <property type="term" value="P:glycine betaine biosynthetic process from choline"/>
    <property type="evidence" value="ECO:0007669"/>
    <property type="project" value="UniProtKB-UniRule"/>
</dbReference>
<dbReference type="CDD" id="cd07090">
    <property type="entry name" value="ALDH_F9_TMBADH"/>
    <property type="match status" value="1"/>
</dbReference>
<dbReference type="FunFam" id="3.40.605.10:FF:000026">
    <property type="entry name" value="Aldehyde dehydrogenase, putative"/>
    <property type="match status" value="1"/>
</dbReference>
<dbReference type="FunFam" id="3.40.309.10:FF:000014">
    <property type="entry name" value="NAD/NADP-dependent betaine aldehyde dehydrogenase"/>
    <property type="match status" value="1"/>
</dbReference>
<dbReference type="FunFam" id="3.40.605.10:FF:000007">
    <property type="entry name" value="NAD/NADP-dependent betaine aldehyde dehydrogenase"/>
    <property type="match status" value="1"/>
</dbReference>
<dbReference type="Gene3D" id="3.40.605.10">
    <property type="entry name" value="Aldehyde Dehydrogenase, Chain A, domain 1"/>
    <property type="match status" value="1"/>
</dbReference>
<dbReference type="Gene3D" id="3.40.309.10">
    <property type="entry name" value="Aldehyde Dehydrogenase, Chain A, domain 2"/>
    <property type="match status" value="1"/>
</dbReference>
<dbReference type="HAMAP" id="MF_00804">
    <property type="entry name" value="BADH"/>
    <property type="match status" value="1"/>
</dbReference>
<dbReference type="InterPro" id="IPR016161">
    <property type="entry name" value="Ald_DH/histidinol_DH"/>
</dbReference>
<dbReference type="InterPro" id="IPR016163">
    <property type="entry name" value="Ald_DH_C"/>
</dbReference>
<dbReference type="InterPro" id="IPR016160">
    <property type="entry name" value="Ald_DH_CS_CYS"/>
</dbReference>
<dbReference type="InterPro" id="IPR029510">
    <property type="entry name" value="Ald_DH_CS_GLU"/>
</dbReference>
<dbReference type="InterPro" id="IPR016162">
    <property type="entry name" value="Ald_DH_N"/>
</dbReference>
<dbReference type="InterPro" id="IPR015590">
    <property type="entry name" value="Aldehyde_DH_dom"/>
</dbReference>
<dbReference type="InterPro" id="IPR011264">
    <property type="entry name" value="BADH"/>
</dbReference>
<dbReference type="NCBIfam" id="TIGR01804">
    <property type="entry name" value="BADH"/>
    <property type="match status" value="1"/>
</dbReference>
<dbReference type="NCBIfam" id="NF009725">
    <property type="entry name" value="PRK13252.1"/>
    <property type="match status" value="1"/>
</dbReference>
<dbReference type="PANTHER" id="PTHR11699">
    <property type="entry name" value="ALDEHYDE DEHYDROGENASE-RELATED"/>
    <property type="match status" value="1"/>
</dbReference>
<dbReference type="Pfam" id="PF00171">
    <property type="entry name" value="Aldedh"/>
    <property type="match status" value="1"/>
</dbReference>
<dbReference type="SUPFAM" id="SSF53720">
    <property type="entry name" value="ALDH-like"/>
    <property type="match status" value="1"/>
</dbReference>
<dbReference type="PROSITE" id="PS00070">
    <property type="entry name" value="ALDEHYDE_DEHYDR_CYS"/>
    <property type="match status" value="1"/>
</dbReference>
<dbReference type="PROSITE" id="PS00687">
    <property type="entry name" value="ALDEHYDE_DEHYDR_GLU"/>
    <property type="match status" value="1"/>
</dbReference>
<sequence>MKAQPKASHFIGGAFVEDKAGKPLPVIYPATGEEIASLYSATPGIIEAAYAAALKAQGEWAALKPVERGRILRRTAEILREKNRKLSKLETLDTGKALQETLVADAASAADALEFFGGIISGFNGEFVELGGSFAYTRREALGICVGIGAWNYPIQIAAWKSAPALAMGNAFIFKPSENTPLSALALAEAYKEAGLPDGLFNVVQGYGDVGAALVNHRLTAKVSLTGSVPTGRRIMAQAGEQLKHVTMELGGKSPLIVFDDADLESAIGGAMLGNFYSTGQVCSNGTRVFVHKNIRERFIERLVERTRKIRIGDPFDEATQMGPLISAAQRDKVLSYIKKGKAEGATLACGGGVPKLQGFDKGFFIEPTVFADVTDTMTIAREEIFGPVMSVLEFSDEDEVIARANDSEFGLAAGVFTADLSRGHHVIGQIKAGTCWINAYNLTSVEVPFGGYKQSGIGRENGIAALAHYSQIKTVYVEMGKVDSPY</sequence>
<comment type="function">
    <text evidence="1">Involved in the biosynthesis of the osmoprotectant glycine betaine. Catalyzes the irreversible oxidation of betaine aldehyde to the corresponding acid.</text>
</comment>
<comment type="catalytic activity">
    <reaction evidence="1">
        <text>betaine aldehyde + NAD(+) + H2O = glycine betaine + NADH + 2 H(+)</text>
        <dbReference type="Rhea" id="RHEA:15305"/>
        <dbReference type="ChEBI" id="CHEBI:15377"/>
        <dbReference type="ChEBI" id="CHEBI:15378"/>
        <dbReference type="ChEBI" id="CHEBI:15710"/>
        <dbReference type="ChEBI" id="CHEBI:17750"/>
        <dbReference type="ChEBI" id="CHEBI:57540"/>
        <dbReference type="ChEBI" id="CHEBI:57945"/>
        <dbReference type="EC" id="1.2.1.8"/>
    </reaction>
    <physiologicalReaction direction="left-to-right" evidence="1">
        <dbReference type="Rhea" id="RHEA:15306"/>
    </physiologicalReaction>
</comment>
<comment type="cofactor">
    <cofactor evidence="1">
        <name>K(+)</name>
        <dbReference type="ChEBI" id="CHEBI:29103"/>
    </cofactor>
    <text evidence="1">Binds 2 potassium ions per subunit.</text>
</comment>
<comment type="pathway">
    <text evidence="1">Amine and polyamine biosynthesis; betaine biosynthesis via choline pathway; betaine from betaine aldehyde: step 1/1.</text>
</comment>
<comment type="subunit">
    <text evidence="1">Dimer of dimers.</text>
</comment>
<comment type="similarity">
    <text evidence="1">Belongs to the aldehyde dehydrogenase family.</text>
</comment>
<gene>
    <name evidence="1" type="primary">betB</name>
    <name type="ordered locus">BMEA_A0589</name>
</gene>
<evidence type="ECO:0000255" key="1">
    <source>
        <dbReference type="HAMAP-Rule" id="MF_00804"/>
    </source>
</evidence>
<proteinExistence type="inferred from homology"/>
<accession>C0RHQ3</accession>